<keyword id="KW-1185">Reference proteome</keyword>
<keyword id="KW-1277">Toxin-antitoxin system</keyword>
<dbReference type="EMBL" id="AE000516">
    <property type="protein sequence ID" value="AAK46320.1"/>
    <property type="molecule type" value="Genomic_DNA"/>
</dbReference>
<dbReference type="PIR" id="D70757">
    <property type="entry name" value="D70757"/>
</dbReference>
<dbReference type="RefSeq" id="WP_003410003.1">
    <property type="nucleotide sequence ID" value="NZ_KK341227.1"/>
</dbReference>
<dbReference type="SMR" id="P9WLP6"/>
<dbReference type="KEGG" id="mtc:MT2044"/>
<dbReference type="PATRIC" id="fig|83331.31.peg.2201"/>
<dbReference type="HOGENOM" id="CLU_148617_0_0_11"/>
<dbReference type="Proteomes" id="UP000001020">
    <property type="component" value="Chromosome"/>
</dbReference>
<dbReference type="InterPro" id="IPR024467">
    <property type="entry name" value="Xre/MbcA/ParS-like_toxin-bd"/>
</dbReference>
<dbReference type="Pfam" id="PF09722">
    <property type="entry name" value="Xre_MbcA_ParS_C"/>
    <property type="match status" value="1"/>
</dbReference>
<sequence length="113" mass="12488">MGVNVLASTVSGAIERLGLTYEEVGDIVDASPRSVARWTAGQVVPQRLNKQRLIELAYVADALAEVLPRDQANVWMFSPNRLLEHRKPADLVRDGEYQRVLALIDAMAEGVFV</sequence>
<reference key="1">
    <citation type="journal article" date="2002" name="J. Bacteriol.">
        <title>Whole-genome comparison of Mycobacterium tuberculosis clinical and laboratory strains.</title>
        <authorList>
            <person name="Fleischmann R.D."/>
            <person name="Alland D."/>
            <person name="Eisen J.A."/>
            <person name="Carpenter L."/>
            <person name="White O."/>
            <person name="Peterson J.D."/>
            <person name="DeBoy R.T."/>
            <person name="Dodson R.J."/>
            <person name="Gwinn M.L."/>
            <person name="Haft D.H."/>
            <person name="Hickey E.K."/>
            <person name="Kolonay J.F."/>
            <person name="Nelson W.C."/>
            <person name="Umayam L.A."/>
            <person name="Ermolaeva M.D."/>
            <person name="Salzberg S.L."/>
            <person name="Delcher A."/>
            <person name="Utterback T.R."/>
            <person name="Weidman J.F."/>
            <person name="Khouri H.M."/>
            <person name="Gill J."/>
            <person name="Mikula A."/>
            <person name="Bishai W."/>
            <person name="Jacobs W.R. Jr."/>
            <person name="Venter J.C."/>
            <person name="Fraser C.M."/>
        </authorList>
    </citation>
    <scope>NUCLEOTIDE SEQUENCE [LARGE SCALE GENOMIC DNA]</scope>
    <source>
        <strain>CDC 1551 / Oshkosh</strain>
    </source>
</reference>
<reference key="2">
    <citation type="journal article" date="2010" name="PLoS Pathog.">
        <title>Functional genetic diversity among Mycobacterium tuberculosis complex clinical isolates: delineation of conserved core and lineage-specific transcriptomes during intracellular survival.</title>
        <authorList>
            <person name="Homolka S."/>
            <person name="Niemann S."/>
            <person name="Russell D.G."/>
            <person name="Rohde K.H."/>
        </authorList>
    </citation>
    <scope>INDUCTION IN MOUSE INFECTION MODEL</scope>
    <source>
        <strain>CDC 1551 / Oshkosh</strain>
    </source>
</reference>
<accession>P9WLP6</accession>
<accession>L0TB09</accession>
<accession>P64909</accession>
<accession>Q10868</accession>
<evidence type="ECO:0000250" key="1">
    <source>
        <dbReference type="UniProtKB" id="P9WLP7"/>
    </source>
</evidence>
<evidence type="ECO:0000250" key="2">
    <source>
        <dbReference type="UniProtKB" id="P9WLP9"/>
    </source>
</evidence>
<evidence type="ECO:0000269" key="3">
    <source>
    </source>
</evidence>
<evidence type="ECO:0000305" key="4"/>
<feature type="chain" id="PRO_0000427442" description="Mycobacterial cidal antitoxin MbcA">
    <location>
        <begin position="1"/>
        <end position="113"/>
    </location>
</feature>
<name>MBCA_MYCTO</name>
<proteinExistence type="evidence at transcript level"/>
<protein>
    <recommendedName>
        <fullName evidence="1">Mycobacterial cidal antitoxin MbcA</fullName>
    </recommendedName>
</protein>
<comment type="function">
    <text evidence="1">Antitoxin component of a type II toxin-antitoxin (TA) system. Neutralizes the activity of cognate toxin MbcT by blocking access to the toxin active site.</text>
</comment>
<comment type="subunit">
    <text evidence="2">Forms a heterotetramer with cognate toxin MbcT.</text>
</comment>
<comment type="induction">
    <text evidence="3">Expression probably induced in both active and resting C57BL/6 mouse macrophages.</text>
</comment>
<comment type="similarity">
    <text evidence="4">Belongs to the MbcA/ParS/Xre antitoxin family.</text>
</comment>
<organism>
    <name type="scientific">Mycobacterium tuberculosis (strain CDC 1551 / Oshkosh)</name>
    <dbReference type="NCBI Taxonomy" id="83331"/>
    <lineage>
        <taxon>Bacteria</taxon>
        <taxon>Bacillati</taxon>
        <taxon>Actinomycetota</taxon>
        <taxon>Actinomycetes</taxon>
        <taxon>Mycobacteriales</taxon>
        <taxon>Mycobacteriaceae</taxon>
        <taxon>Mycobacterium</taxon>
        <taxon>Mycobacterium tuberculosis complex</taxon>
    </lineage>
</organism>
<gene>
    <name type="primary">mbcA</name>
    <name type="ordered locus">MT2044</name>
</gene>